<sequence length="473" mass="54839">MLKIFNTLTKKKEKFIPINAGKIKIYVCGVTVYDLCHLGHARTFIVFDSVIRYLRHCGYQVSYVRNITDIDDKIIKRAYENNETTQQLTNRMIQEMHLDLDALNILRPNYEPKVTEHIDIIIKFICLLISKKHAYTAPNGDIMFSVETMHNYGVLSNKENPPKIHDNILKIPNIKKNPMDFVLWKKTTYNNKLGEPCWSSPWGLGRPGWHIECSAMNYSIFGNQIDIHGGGSDLIFPHHDNEIAQSVCAHETSYANIWMHSGLLLLNYEKMSKSLNNFFTIRDILKHYDPETIRFFLMSAHYRSQLKYNDNNLKNAQTSLKRLYIALRDTNPTIQPNGGDNEGEYFISKFISKMNDDFNTPEAYSVLFDIAHRLNNLKIKGHSLLAQGMAATLKYLANIIGLLHQNPEIFLKKITLKHNKNRHFEKIQKLIQCREVARKNNQWELADSIRKKLTVMGITLEDGPTGITKWHFK</sequence>
<organism>
    <name type="scientific">Blochmanniella pennsylvanica (strain BPEN)</name>
    <dbReference type="NCBI Taxonomy" id="291272"/>
    <lineage>
        <taxon>Bacteria</taxon>
        <taxon>Pseudomonadati</taxon>
        <taxon>Pseudomonadota</taxon>
        <taxon>Gammaproteobacteria</taxon>
        <taxon>Enterobacterales</taxon>
        <taxon>Enterobacteriaceae</taxon>
        <taxon>ant endosymbionts</taxon>
        <taxon>Candidatus Blochmanniella</taxon>
    </lineage>
</organism>
<dbReference type="EC" id="6.1.1.16" evidence="1"/>
<dbReference type="EMBL" id="CP000016">
    <property type="protein sequence ID" value="AAZ40943.1"/>
    <property type="molecule type" value="Genomic_DNA"/>
</dbReference>
<dbReference type="RefSeq" id="WP_011282850.1">
    <property type="nucleotide sequence ID" value="NC_007292.1"/>
</dbReference>
<dbReference type="SMR" id="Q493A1"/>
<dbReference type="STRING" id="291272.BPEN_312"/>
<dbReference type="KEGG" id="bpn:BPEN_312"/>
<dbReference type="eggNOG" id="COG0215">
    <property type="taxonomic scope" value="Bacteria"/>
</dbReference>
<dbReference type="HOGENOM" id="CLU_013528_0_1_6"/>
<dbReference type="OrthoDB" id="9815130at2"/>
<dbReference type="Proteomes" id="UP000007794">
    <property type="component" value="Chromosome"/>
</dbReference>
<dbReference type="GO" id="GO:0005829">
    <property type="term" value="C:cytosol"/>
    <property type="evidence" value="ECO:0007669"/>
    <property type="project" value="TreeGrafter"/>
</dbReference>
<dbReference type="GO" id="GO:0005524">
    <property type="term" value="F:ATP binding"/>
    <property type="evidence" value="ECO:0007669"/>
    <property type="project" value="UniProtKB-UniRule"/>
</dbReference>
<dbReference type="GO" id="GO:0004817">
    <property type="term" value="F:cysteine-tRNA ligase activity"/>
    <property type="evidence" value="ECO:0007669"/>
    <property type="project" value="UniProtKB-UniRule"/>
</dbReference>
<dbReference type="GO" id="GO:0008270">
    <property type="term" value="F:zinc ion binding"/>
    <property type="evidence" value="ECO:0007669"/>
    <property type="project" value="UniProtKB-UniRule"/>
</dbReference>
<dbReference type="GO" id="GO:0006423">
    <property type="term" value="P:cysteinyl-tRNA aminoacylation"/>
    <property type="evidence" value="ECO:0007669"/>
    <property type="project" value="UniProtKB-UniRule"/>
</dbReference>
<dbReference type="CDD" id="cd07963">
    <property type="entry name" value="Anticodon_Ia_Cys"/>
    <property type="match status" value="1"/>
</dbReference>
<dbReference type="CDD" id="cd00672">
    <property type="entry name" value="CysRS_core"/>
    <property type="match status" value="1"/>
</dbReference>
<dbReference type="FunFam" id="3.40.50.620:FF:000009">
    <property type="entry name" value="Cysteine--tRNA ligase"/>
    <property type="match status" value="1"/>
</dbReference>
<dbReference type="Gene3D" id="1.20.120.1910">
    <property type="entry name" value="Cysteine-tRNA ligase, C-terminal anti-codon recognition domain"/>
    <property type="match status" value="1"/>
</dbReference>
<dbReference type="Gene3D" id="3.40.50.620">
    <property type="entry name" value="HUPs"/>
    <property type="match status" value="1"/>
</dbReference>
<dbReference type="HAMAP" id="MF_00041">
    <property type="entry name" value="Cys_tRNA_synth"/>
    <property type="match status" value="1"/>
</dbReference>
<dbReference type="InterPro" id="IPR015803">
    <property type="entry name" value="Cys-tRNA-ligase"/>
</dbReference>
<dbReference type="InterPro" id="IPR015273">
    <property type="entry name" value="Cys-tRNA-synt_Ia_DALR"/>
</dbReference>
<dbReference type="InterPro" id="IPR024909">
    <property type="entry name" value="Cys-tRNA/MSH_ligase"/>
</dbReference>
<dbReference type="InterPro" id="IPR014729">
    <property type="entry name" value="Rossmann-like_a/b/a_fold"/>
</dbReference>
<dbReference type="InterPro" id="IPR032678">
    <property type="entry name" value="tRNA-synt_1_cat_dom"/>
</dbReference>
<dbReference type="InterPro" id="IPR009080">
    <property type="entry name" value="tRNAsynth_Ia_anticodon-bd"/>
</dbReference>
<dbReference type="NCBIfam" id="TIGR00435">
    <property type="entry name" value="cysS"/>
    <property type="match status" value="1"/>
</dbReference>
<dbReference type="PANTHER" id="PTHR10890:SF3">
    <property type="entry name" value="CYSTEINE--TRNA LIGASE, CYTOPLASMIC"/>
    <property type="match status" value="1"/>
</dbReference>
<dbReference type="PANTHER" id="PTHR10890">
    <property type="entry name" value="CYSTEINYL-TRNA SYNTHETASE"/>
    <property type="match status" value="1"/>
</dbReference>
<dbReference type="Pfam" id="PF09190">
    <property type="entry name" value="DALR_2"/>
    <property type="match status" value="1"/>
</dbReference>
<dbReference type="Pfam" id="PF01406">
    <property type="entry name" value="tRNA-synt_1e"/>
    <property type="match status" value="1"/>
</dbReference>
<dbReference type="PRINTS" id="PR00983">
    <property type="entry name" value="TRNASYNTHCYS"/>
</dbReference>
<dbReference type="SMART" id="SM00840">
    <property type="entry name" value="DALR_2"/>
    <property type="match status" value="1"/>
</dbReference>
<dbReference type="SUPFAM" id="SSF47323">
    <property type="entry name" value="Anticodon-binding domain of a subclass of class I aminoacyl-tRNA synthetases"/>
    <property type="match status" value="1"/>
</dbReference>
<dbReference type="SUPFAM" id="SSF52374">
    <property type="entry name" value="Nucleotidylyl transferase"/>
    <property type="match status" value="1"/>
</dbReference>
<keyword id="KW-0030">Aminoacyl-tRNA synthetase</keyword>
<keyword id="KW-0067">ATP-binding</keyword>
<keyword id="KW-0963">Cytoplasm</keyword>
<keyword id="KW-0436">Ligase</keyword>
<keyword id="KW-0479">Metal-binding</keyword>
<keyword id="KW-0547">Nucleotide-binding</keyword>
<keyword id="KW-0648">Protein biosynthesis</keyword>
<keyword id="KW-1185">Reference proteome</keyword>
<keyword id="KW-0862">Zinc</keyword>
<reference key="1">
    <citation type="journal article" date="2005" name="Genome Res.">
        <title>Genome sequence of Blochmannia pennsylvanicus indicates parallel evolutionary trends among bacterial mutualists of insects.</title>
        <authorList>
            <person name="Degnan P.H."/>
            <person name="Lazarus A.B."/>
            <person name="Wernegreen J.J."/>
        </authorList>
    </citation>
    <scope>NUCLEOTIDE SEQUENCE [LARGE SCALE GENOMIC DNA]</scope>
    <source>
        <strain>BPEN</strain>
    </source>
</reference>
<accession>Q493A1</accession>
<evidence type="ECO:0000255" key="1">
    <source>
        <dbReference type="HAMAP-Rule" id="MF_00041"/>
    </source>
</evidence>
<feature type="chain" id="PRO_0000240891" description="Cysteine--tRNA ligase">
    <location>
        <begin position="1"/>
        <end position="473"/>
    </location>
</feature>
<feature type="short sequence motif" description="'HIGH' region">
    <location>
        <begin position="30"/>
        <end position="40"/>
    </location>
</feature>
<feature type="short sequence motif" description="'KMSKS' region">
    <location>
        <begin position="270"/>
        <end position="274"/>
    </location>
</feature>
<feature type="binding site" evidence="1">
    <location>
        <position position="28"/>
    </location>
    <ligand>
        <name>Zn(2+)</name>
        <dbReference type="ChEBI" id="CHEBI:29105"/>
    </ligand>
</feature>
<feature type="binding site" evidence="1">
    <location>
        <position position="213"/>
    </location>
    <ligand>
        <name>Zn(2+)</name>
        <dbReference type="ChEBI" id="CHEBI:29105"/>
    </ligand>
</feature>
<feature type="binding site" evidence="1">
    <location>
        <position position="238"/>
    </location>
    <ligand>
        <name>Zn(2+)</name>
        <dbReference type="ChEBI" id="CHEBI:29105"/>
    </ligand>
</feature>
<feature type="binding site" evidence="1">
    <location>
        <position position="242"/>
    </location>
    <ligand>
        <name>Zn(2+)</name>
        <dbReference type="ChEBI" id="CHEBI:29105"/>
    </ligand>
</feature>
<feature type="binding site" evidence="1">
    <location>
        <position position="273"/>
    </location>
    <ligand>
        <name>ATP</name>
        <dbReference type="ChEBI" id="CHEBI:30616"/>
    </ligand>
</feature>
<comment type="catalytic activity">
    <reaction evidence="1">
        <text>tRNA(Cys) + L-cysteine + ATP = L-cysteinyl-tRNA(Cys) + AMP + diphosphate</text>
        <dbReference type="Rhea" id="RHEA:17773"/>
        <dbReference type="Rhea" id="RHEA-COMP:9661"/>
        <dbReference type="Rhea" id="RHEA-COMP:9679"/>
        <dbReference type="ChEBI" id="CHEBI:30616"/>
        <dbReference type="ChEBI" id="CHEBI:33019"/>
        <dbReference type="ChEBI" id="CHEBI:35235"/>
        <dbReference type="ChEBI" id="CHEBI:78442"/>
        <dbReference type="ChEBI" id="CHEBI:78517"/>
        <dbReference type="ChEBI" id="CHEBI:456215"/>
        <dbReference type="EC" id="6.1.1.16"/>
    </reaction>
</comment>
<comment type="cofactor">
    <cofactor evidence="1">
        <name>Zn(2+)</name>
        <dbReference type="ChEBI" id="CHEBI:29105"/>
    </cofactor>
    <text evidence="1">Binds 1 zinc ion per subunit.</text>
</comment>
<comment type="subunit">
    <text evidence="1">Monomer.</text>
</comment>
<comment type="subcellular location">
    <subcellularLocation>
        <location evidence="1">Cytoplasm</location>
    </subcellularLocation>
</comment>
<comment type="similarity">
    <text evidence="1">Belongs to the class-I aminoacyl-tRNA synthetase family.</text>
</comment>
<name>SYC_BLOPB</name>
<gene>
    <name evidence="1" type="primary">cysS</name>
    <name type="ordered locus">BPEN_312</name>
</gene>
<protein>
    <recommendedName>
        <fullName evidence="1">Cysteine--tRNA ligase</fullName>
        <ecNumber evidence="1">6.1.1.16</ecNumber>
    </recommendedName>
    <alternativeName>
        <fullName evidence="1">Cysteinyl-tRNA synthetase</fullName>
        <shortName evidence="1">CysRS</shortName>
    </alternativeName>
</protein>
<proteinExistence type="inferred from homology"/>